<name>RLME_NITWN</name>
<evidence type="ECO:0000255" key="1">
    <source>
        <dbReference type="HAMAP-Rule" id="MF_01547"/>
    </source>
</evidence>
<comment type="function">
    <text evidence="1">Specifically methylates the uridine in position 2552 of 23S rRNA at the 2'-O position of the ribose in the fully assembled 50S ribosomal subunit.</text>
</comment>
<comment type="catalytic activity">
    <reaction evidence="1">
        <text>uridine(2552) in 23S rRNA + S-adenosyl-L-methionine = 2'-O-methyluridine(2552) in 23S rRNA + S-adenosyl-L-homocysteine + H(+)</text>
        <dbReference type="Rhea" id="RHEA:42720"/>
        <dbReference type="Rhea" id="RHEA-COMP:10202"/>
        <dbReference type="Rhea" id="RHEA-COMP:10203"/>
        <dbReference type="ChEBI" id="CHEBI:15378"/>
        <dbReference type="ChEBI" id="CHEBI:57856"/>
        <dbReference type="ChEBI" id="CHEBI:59789"/>
        <dbReference type="ChEBI" id="CHEBI:65315"/>
        <dbReference type="ChEBI" id="CHEBI:74478"/>
        <dbReference type="EC" id="2.1.1.166"/>
    </reaction>
</comment>
<comment type="subcellular location">
    <subcellularLocation>
        <location evidence="1">Cytoplasm</location>
    </subcellularLocation>
</comment>
<comment type="similarity">
    <text evidence="1">Belongs to the class I-like SAM-binding methyltransferase superfamily. RNA methyltransferase RlmE family.</text>
</comment>
<protein>
    <recommendedName>
        <fullName evidence="1">Ribosomal RNA large subunit methyltransferase E</fullName>
        <ecNumber evidence="1">2.1.1.166</ecNumber>
    </recommendedName>
    <alternativeName>
        <fullName evidence="1">23S rRNA Um2552 methyltransferase</fullName>
    </alternativeName>
    <alternativeName>
        <fullName evidence="1">rRNA (uridine-2'-O-)-methyltransferase</fullName>
    </alternativeName>
</protein>
<organism>
    <name type="scientific">Nitrobacter winogradskyi (strain ATCC 25391 / DSM 10237 / CIP 104748 / NCIMB 11846 / Nb-255)</name>
    <dbReference type="NCBI Taxonomy" id="323098"/>
    <lineage>
        <taxon>Bacteria</taxon>
        <taxon>Pseudomonadati</taxon>
        <taxon>Pseudomonadota</taxon>
        <taxon>Alphaproteobacteria</taxon>
        <taxon>Hyphomicrobiales</taxon>
        <taxon>Nitrobacteraceae</taxon>
        <taxon>Nitrobacter</taxon>
    </lineage>
</organism>
<dbReference type="EC" id="2.1.1.166" evidence="1"/>
<dbReference type="EMBL" id="CP000115">
    <property type="protein sequence ID" value="ABA05404.1"/>
    <property type="molecule type" value="Genomic_DNA"/>
</dbReference>
<dbReference type="RefSeq" id="WP_011315373.1">
    <property type="nucleotide sequence ID" value="NC_007406.1"/>
</dbReference>
<dbReference type="SMR" id="Q3SQN7"/>
<dbReference type="STRING" id="323098.Nwi_2150"/>
<dbReference type="KEGG" id="nwi:Nwi_2150"/>
<dbReference type="eggNOG" id="COG0293">
    <property type="taxonomic scope" value="Bacteria"/>
</dbReference>
<dbReference type="HOGENOM" id="CLU_009422_4_0_5"/>
<dbReference type="OrthoDB" id="9790080at2"/>
<dbReference type="Proteomes" id="UP000002531">
    <property type="component" value="Chromosome"/>
</dbReference>
<dbReference type="GO" id="GO:0005737">
    <property type="term" value="C:cytoplasm"/>
    <property type="evidence" value="ECO:0007669"/>
    <property type="project" value="UniProtKB-SubCell"/>
</dbReference>
<dbReference type="GO" id="GO:0008650">
    <property type="term" value="F:rRNA (uridine-2'-O-)-methyltransferase activity"/>
    <property type="evidence" value="ECO:0007669"/>
    <property type="project" value="UniProtKB-UniRule"/>
</dbReference>
<dbReference type="FunFam" id="3.40.50.150:FF:000005">
    <property type="entry name" value="Ribosomal RNA large subunit methyltransferase E"/>
    <property type="match status" value="1"/>
</dbReference>
<dbReference type="Gene3D" id="3.40.50.150">
    <property type="entry name" value="Vaccinia Virus protein VP39"/>
    <property type="match status" value="1"/>
</dbReference>
<dbReference type="HAMAP" id="MF_01547">
    <property type="entry name" value="RNA_methyltr_E"/>
    <property type="match status" value="1"/>
</dbReference>
<dbReference type="InterPro" id="IPR050082">
    <property type="entry name" value="RNA_methyltr_RlmE"/>
</dbReference>
<dbReference type="InterPro" id="IPR002877">
    <property type="entry name" value="RNA_MeTrfase_FtsJ_dom"/>
</dbReference>
<dbReference type="InterPro" id="IPR015507">
    <property type="entry name" value="rRNA-MeTfrase_E"/>
</dbReference>
<dbReference type="InterPro" id="IPR029063">
    <property type="entry name" value="SAM-dependent_MTases_sf"/>
</dbReference>
<dbReference type="PANTHER" id="PTHR10920">
    <property type="entry name" value="RIBOSOMAL RNA METHYLTRANSFERASE"/>
    <property type="match status" value="1"/>
</dbReference>
<dbReference type="PANTHER" id="PTHR10920:SF18">
    <property type="entry name" value="RRNA METHYLTRANSFERASE 2, MITOCHONDRIAL"/>
    <property type="match status" value="1"/>
</dbReference>
<dbReference type="Pfam" id="PF01728">
    <property type="entry name" value="FtsJ"/>
    <property type="match status" value="1"/>
</dbReference>
<dbReference type="PIRSF" id="PIRSF005461">
    <property type="entry name" value="23S_rRNA_mtase"/>
    <property type="match status" value="1"/>
</dbReference>
<dbReference type="SUPFAM" id="SSF53335">
    <property type="entry name" value="S-adenosyl-L-methionine-dependent methyltransferases"/>
    <property type="match status" value="1"/>
</dbReference>
<feature type="chain" id="PRO_0000155514" description="Ribosomal RNA large subunit methyltransferase E">
    <location>
        <begin position="1"/>
        <end position="230"/>
    </location>
</feature>
<feature type="active site" description="Proton acceptor" evidence="1">
    <location>
        <position position="179"/>
    </location>
</feature>
<feature type="binding site" evidence="1">
    <location>
        <position position="76"/>
    </location>
    <ligand>
        <name>S-adenosyl-L-methionine</name>
        <dbReference type="ChEBI" id="CHEBI:59789"/>
    </ligand>
</feature>
<feature type="binding site" evidence="1">
    <location>
        <position position="78"/>
    </location>
    <ligand>
        <name>S-adenosyl-L-methionine</name>
        <dbReference type="ChEBI" id="CHEBI:59789"/>
    </ligand>
</feature>
<feature type="binding site" evidence="1">
    <location>
        <position position="99"/>
    </location>
    <ligand>
        <name>S-adenosyl-L-methionine</name>
        <dbReference type="ChEBI" id="CHEBI:59789"/>
    </ligand>
</feature>
<feature type="binding site" evidence="1">
    <location>
        <position position="115"/>
    </location>
    <ligand>
        <name>S-adenosyl-L-methionine</name>
        <dbReference type="ChEBI" id="CHEBI:59789"/>
    </ligand>
</feature>
<feature type="binding site" evidence="1">
    <location>
        <position position="139"/>
    </location>
    <ligand>
        <name>S-adenosyl-L-methionine</name>
        <dbReference type="ChEBI" id="CHEBI:59789"/>
    </ligand>
</feature>
<sequence>MAKDTTGRLHVTVKTGGKRKLSSKLWLERQLNDPYVAQAKRDGWRSRASFKLIEMDDKHRFLKPGMTVVDLGAAPGGWSQVAAKRVGAAEGKGRVIAIDLLEMPEIVGVTFARLDFLDDSAPDKLLAMMDGAADVVLSDMAANTTGHRKTDQLRIVGLVESAAAFTSDVLRPGGTFIAKVFQSGADAGLLVQLKRDFQTVRHVKPAASRQDSSERYVMATGFRGGRRDKC</sequence>
<proteinExistence type="inferred from homology"/>
<accession>Q3SQN7</accession>
<gene>
    <name evidence="1" type="primary">rlmE</name>
    <name evidence="1" type="synonym">ftsJ</name>
    <name evidence="1" type="synonym">rrmJ</name>
    <name type="ordered locus">Nwi_2150</name>
</gene>
<reference key="1">
    <citation type="journal article" date="2006" name="Appl. Environ. Microbiol.">
        <title>Genome sequence of the chemolithoautotrophic nitrite-oxidizing bacterium Nitrobacter winogradskyi Nb-255.</title>
        <authorList>
            <person name="Starkenburg S.R."/>
            <person name="Chain P.S.G."/>
            <person name="Sayavedra-Soto L.A."/>
            <person name="Hauser L."/>
            <person name="Land M.L."/>
            <person name="Larimer F.W."/>
            <person name="Malfatti S.A."/>
            <person name="Klotz M.G."/>
            <person name="Bottomley P.J."/>
            <person name="Arp D.J."/>
            <person name="Hickey W.J."/>
        </authorList>
    </citation>
    <scope>NUCLEOTIDE SEQUENCE [LARGE SCALE GENOMIC DNA]</scope>
    <source>
        <strain>ATCC 25391 / DSM 10237 / CIP 104748 / NCIMB 11846 / Nb-255</strain>
    </source>
</reference>
<keyword id="KW-0963">Cytoplasm</keyword>
<keyword id="KW-0489">Methyltransferase</keyword>
<keyword id="KW-1185">Reference proteome</keyword>
<keyword id="KW-0698">rRNA processing</keyword>
<keyword id="KW-0949">S-adenosyl-L-methionine</keyword>
<keyword id="KW-0808">Transferase</keyword>